<reference key="1">
    <citation type="journal article" date="2000" name="DNA Res.">
        <title>Complete genome structure of the nitrogen-fixing symbiotic bacterium Mesorhizobium loti.</title>
        <authorList>
            <person name="Kaneko T."/>
            <person name="Nakamura Y."/>
            <person name="Sato S."/>
            <person name="Asamizu E."/>
            <person name="Kato T."/>
            <person name="Sasamoto S."/>
            <person name="Watanabe A."/>
            <person name="Idesawa K."/>
            <person name="Ishikawa A."/>
            <person name="Kawashima K."/>
            <person name="Kimura T."/>
            <person name="Kishida Y."/>
            <person name="Kiyokawa C."/>
            <person name="Kohara M."/>
            <person name="Matsumoto M."/>
            <person name="Matsuno A."/>
            <person name="Mochizuki Y."/>
            <person name="Nakayama S."/>
            <person name="Nakazaki N."/>
            <person name="Shimpo S."/>
            <person name="Sugimoto M."/>
            <person name="Takeuchi C."/>
            <person name="Yamada M."/>
            <person name="Tabata S."/>
        </authorList>
    </citation>
    <scope>NUCLEOTIDE SEQUENCE [LARGE SCALE GENOMIC DNA]</scope>
    <source>
        <strain>LMG 29417 / CECT 9101 / MAFF 303099</strain>
    </source>
</reference>
<keyword id="KW-0028">Amino-acid biosynthesis</keyword>
<keyword id="KW-0963">Cytoplasm</keyword>
<keyword id="KW-0413">Isomerase</keyword>
<keyword id="KW-0457">Lysine biosynthesis</keyword>
<dbReference type="EC" id="5.1.1.7" evidence="1"/>
<dbReference type="EMBL" id="BA000012">
    <property type="protein sequence ID" value="BAB51004.1"/>
    <property type="molecule type" value="Genomic_DNA"/>
</dbReference>
<dbReference type="RefSeq" id="WP_010912346.1">
    <property type="nucleotide sequence ID" value="NC_002678.2"/>
</dbReference>
<dbReference type="SMR" id="Q98EB6"/>
<dbReference type="KEGG" id="mlo:mlr4318"/>
<dbReference type="PATRIC" id="fig|266835.9.peg.3408"/>
<dbReference type="eggNOG" id="COG0253">
    <property type="taxonomic scope" value="Bacteria"/>
</dbReference>
<dbReference type="HOGENOM" id="CLU_053306_1_0_5"/>
<dbReference type="UniPathway" id="UPA00034">
    <property type="reaction ID" value="UER00025"/>
</dbReference>
<dbReference type="Proteomes" id="UP000000552">
    <property type="component" value="Chromosome"/>
</dbReference>
<dbReference type="GO" id="GO:0005829">
    <property type="term" value="C:cytosol"/>
    <property type="evidence" value="ECO:0007669"/>
    <property type="project" value="TreeGrafter"/>
</dbReference>
<dbReference type="GO" id="GO:0008837">
    <property type="term" value="F:diaminopimelate epimerase activity"/>
    <property type="evidence" value="ECO:0007669"/>
    <property type="project" value="UniProtKB-UniRule"/>
</dbReference>
<dbReference type="GO" id="GO:0009089">
    <property type="term" value="P:lysine biosynthetic process via diaminopimelate"/>
    <property type="evidence" value="ECO:0007669"/>
    <property type="project" value="UniProtKB-UniRule"/>
</dbReference>
<dbReference type="Gene3D" id="3.10.310.10">
    <property type="entry name" value="Diaminopimelate Epimerase, Chain A, domain 1"/>
    <property type="match status" value="2"/>
</dbReference>
<dbReference type="HAMAP" id="MF_00197">
    <property type="entry name" value="DAP_epimerase"/>
    <property type="match status" value="1"/>
</dbReference>
<dbReference type="InterPro" id="IPR018510">
    <property type="entry name" value="DAP_epimerase_AS"/>
</dbReference>
<dbReference type="InterPro" id="IPR001653">
    <property type="entry name" value="DAP_epimerase_DapF"/>
</dbReference>
<dbReference type="NCBIfam" id="TIGR00652">
    <property type="entry name" value="DapF"/>
    <property type="match status" value="1"/>
</dbReference>
<dbReference type="PANTHER" id="PTHR31689:SF0">
    <property type="entry name" value="DIAMINOPIMELATE EPIMERASE"/>
    <property type="match status" value="1"/>
</dbReference>
<dbReference type="PANTHER" id="PTHR31689">
    <property type="entry name" value="DIAMINOPIMELATE EPIMERASE, CHLOROPLASTIC"/>
    <property type="match status" value="1"/>
</dbReference>
<dbReference type="Pfam" id="PF01678">
    <property type="entry name" value="DAP_epimerase"/>
    <property type="match status" value="2"/>
</dbReference>
<dbReference type="SUPFAM" id="SSF54506">
    <property type="entry name" value="Diaminopimelate epimerase-like"/>
    <property type="match status" value="2"/>
</dbReference>
<dbReference type="PROSITE" id="PS01326">
    <property type="entry name" value="DAP_EPIMERASE"/>
    <property type="match status" value="1"/>
</dbReference>
<evidence type="ECO:0000255" key="1">
    <source>
        <dbReference type="HAMAP-Rule" id="MF_00197"/>
    </source>
</evidence>
<accession>Q98EB6</accession>
<proteinExistence type="inferred from homology"/>
<feature type="chain" id="PRO_0000149864" description="Diaminopimelate epimerase">
    <location>
        <begin position="1"/>
        <end position="294"/>
    </location>
</feature>
<feature type="active site" description="Proton donor" evidence="1">
    <location>
        <position position="76"/>
    </location>
</feature>
<feature type="active site" description="Proton acceptor" evidence="1">
    <location>
        <position position="224"/>
    </location>
</feature>
<feature type="binding site" evidence="1">
    <location>
        <position position="15"/>
    </location>
    <ligand>
        <name>substrate</name>
    </ligand>
</feature>
<feature type="binding site" evidence="1">
    <location>
        <position position="47"/>
    </location>
    <ligand>
        <name>substrate</name>
    </ligand>
</feature>
<feature type="binding site" evidence="1">
    <location>
        <position position="67"/>
    </location>
    <ligand>
        <name>substrate</name>
    </ligand>
</feature>
<feature type="binding site" evidence="1">
    <location>
        <begin position="77"/>
        <end position="78"/>
    </location>
    <ligand>
        <name>substrate</name>
    </ligand>
</feature>
<feature type="binding site" evidence="1">
    <location>
        <position position="163"/>
    </location>
    <ligand>
        <name>substrate</name>
    </ligand>
</feature>
<feature type="binding site" evidence="1">
    <location>
        <position position="197"/>
    </location>
    <ligand>
        <name>substrate</name>
    </ligand>
</feature>
<feature type="binding site" evidence="1">
    <location>
        <begin position="215"/>
        <end position="216"/>
    </location>
    <ligand>
        <name>substrate</name>
    </ligand>
</feature>
<feature type="binding site" evidence="1">
    <location>
        <begin position="225"/>
        <end position="226"/>
    </location>
    <ligand>
        <name>substrate</name>
    </ligand>
</feature>
<feature type="site" description="Could be important to modulate the pK values of the two catalytic cysteine residues" evidence="1">
    <location>
        <position position="165"/>
    </location>
</feature>
<feature type="site" description="Could be important to modulate the pK values of the two catalytic cysteine residues" evidence="1">
    <location>
        <position position="215"/>
    </location>
</feature>
<comment type="function">
    <text evidence="1">Catalyzes the stereoinversion of LL-2,6-diaminopimelate (L,L-DAP) to meso-diaminopimelate (meso-DAP), a precursor of L-lysine and an essential component of the bacterial peptidoglycan.</text>
</comment>
<comment type="catalytic activity">
    <reaction evidence="1">
        <text>(2S,6S)-2,6-diaminopimelate = meso-2,6-diaminopimelate</text>
        <dbReference type="Rhea" id="RHEA:15393"/>
        <dbReference type="ChEBI" id="CHEBI:57609"/>
        <dbReference type="ChEBI" id="CHEBI:57791"/>
        <dbReference type="EC" id="5.1.1.7"/>
    </reaction>
</comment>
<comment type="pathway">
    <text evidence="1">Amino-acid biosynthesis; L-lysine biosynthesis via DAP pathway; DL-2,6-diaminopimelate from LL-2,6-diaminopimelate: step 1/1.</text>
</comment>
<comment type="subunit">
    <text evidence="1">Homodimer.</text>
</comment>
<comment type="subcellular location">
    <subcellularLocation>
        <location evidence="1">Cytoplasm</location>
    </subcellularLocation>
</comment>
<comment type="similarity">
    <text evidence="1">Belongs to the diaminopimelate epimerase family.</text>
</comment>
<gene>
    <name evidence="1" type="primary">dapF</name>
    <name type="ordered locus">mlr4318</name>
</gene>
<sequence length="294" mass="31559">MASTAPFAKMNGIGNEIIVADMRGRADQVTAAAALALNGDAATRFDQIMAIHDARTPGTAYYVDILNSDGTSAQACGNGMRCVVQALAAETGQKTFTFETRAGILNAREHADGTISVDMGMPHFGWQEIPLAEEFRDTRMIELQIGPIDAPVLHSPSAVSMGNPHAIFWVDRDVWSYELERFGPLLENHPIFPERANITIAQVTSPESMIIRTWERGAGLTKACGSAACASVVAAARTRRTGRSVNLLTPGGGTLHVEWLDNDHVILTGAAEWEFSGSFDPSTGTWARDTESAA</sequence>
<organism>
    <name type="scientific">Mesorhizobium japonicum (strain LMG 29417 / CECT 9101 / MAFF 303099)</name>
    <name type="common">Mesorhizobium loti (strain MAFF 303099)</name>
    <dbReference type="NCBI Taxonomy" id="266835"/>
    <lineage>
        <taxon>Bacteria</taxon>
        <taxon>Pseudomonadati</taxon>
        <taxon>Pseudomonadota</taxon>
        <taxon>Alphaproteobacteria</taxon>
        <taxon>Hyphomicrobiales</taxon>
        <taxon>Phyllobacteriaceae</taxon>
        <taxon>Mesorhizobium</taxon>
    </lineage>
</organism>
<protein>
    <recommendedName>
        <fullName evidence="1">Diaminopimelate epimerase</fullName>
        <shortName evidence="1">DAP epimerase</shortName>
        <ecNumber evidence="1">5.1.1.7</ecNumber>
    </recommendedName>
    <alternativeName>
        <fullName evidence="1">PLP-independent amino acid racemase</fullName>
    </alternativeName>
</protein>
<name>DAPF_RHILO</name>